<gene>
    <name evidence="1" type="primary">hisH</name>
    <name type="ordered locus">NGO_0213</name>
</gene>
<name>HIS5_NEIG1</name>
<proteinExistence type="inferred from homology"/>
<protein>
    <recommendedName>
        <fullName evidence="1">Imidazole glycerol phosphate synthase subunit HisH</fullName>
        <ecNumber evidence="1">4.3.2.10</ecNumber>
    </recommendedName>
    <alternativeName>
        <fullName evidence="1">IGP synthase glutaminase subunit</fullName>
        <ecNumber evidence="1">3.5.1.2</ecNumber>
    </alternativeName>
    <alternativeName>
        <fullName evidence="1">IGP synthase subunit HisH</fullName>
    </alternativeName>
    <alternativeName>
        <fullName evidence="1">ImGP synthase subunit HisH</fullName>
        <shortName evidence="1">IGPS subunit HisH</shortName>
    </alternativeName>
</protein>
<feature type="chain" id="PRO_0000231736" description="Imidazole glycerol phosphate synthase subunit HisH">
    <location>
        <begin position="1"/>
        <end position="212"/>
    </location>
</feature>
<feature type="domain" description="Glutamine amidotransferase type-1" evidence="1">
    <location>
        <begin position="2"/>
        <end position="212"/>
    </location>
</feature>
<feature type="active site" description="Nucleophile" evidence="1">
    <location>
        <position position="85"/>
    </location>
</feature>
<feature type="active site" evidence="1">
    <location>
        <position position="194"/>
    </location>
</feature>
<feature type="active site" evidence="1">
    <location>
        <position position="196"/>
    </location>
</feature>
<evidence type="ECO:0000255" key="1">
    <source>
        <dbReference type="HAMAP-Rule" id="MF_00278"/>
    </source>
</evidence>
<accession>Q5FA21</accession>
<comment type="function">
    <text evidence="1">IGPS catalyzes the conversion of PRFAR and glutamine to IGP, AICAR and glutamate. The HisH subunit catalyzes the hydrolysis of glutamine to glutamate and ammonia as part of the synthesis of IGP and AICAR. The resulting ammonia molecule is channeled to the active site of HisF.</text>
</comment>
<comment type="catalytic activity">
    <reaction evidence="1">
        <text>5-[(5-phospho-1-deoxy-D-ribulos-1-ylimino)methylamino]-1-(5-phospho-beta-D-ribosyl)imidazole-4-carboxamide + L-glutamine = D-erythro-1-(imidazol-4-yl)glycerol 3-phosphate + 5-amino-1-(5-phospho-beta-D-ribosyl)imidazole-4-carboxamide + L-glutamate + H(+)</text>
        <dbReference type="Rhea" id="RHEA:24793"/>
        <dbReference type="ChEBI" id="CHEBI:15378"/>
        <dbReference type="ChEBI" id="CHEBI:29985"/>
        <dbReference type="ChEBI" id="CHEBI:58278"/>
        <dbReference type="ChEBI" id="CHEBI:58359"/>
        <dbReference type="ChEBI" id="CHEBI:58475"/>
        <dbReference type="ChEBI" id="CHEBI:58525"/>
        <dbReference type="EC" id="4.3.2.10"/>
    </reaction>
</comment>
<comment type="catalytic activity">
    <reaction evidence="1">
        <text>L-glutamine + H2O = L-glutamate + NH4(+)</text>
        <dbReference type="Rhea" id="RHEA:15889"/>
        <dbReference type="ChEBI" id="CHEBI:15377"/>
        <dbReference type="ChEBI" id="CHEBI:28938"/>
        <dbReference type="ChEBI" id="CHEBI:29985"/>
        <dbReference type="ChEBI" id="CHEBI:58359"/>
        <dbReference type="EC" id="3.5.1.2"/>
    </reaction>
</comment>
<comment type="pathway">
    <text evidence="1">Amino-acid biosynthesis; L-histidine biosynthesis; L-histidine from 5-phospho-alpha-D-ribose 1-diphosphate: step 5/9.</text>
</comment>
<comment type="subunit">
    <text evidence="1">Heterodimer of HisH and HisF.</text>
</comment>
<comment type="subcellular location">
    <subcellularLocation>
        <location evidence="1">Cytoplasm</location>
    </subcellularLocation>
</comment>
<reference key="1">
    <citation type="submission" date="2003-03" db="EMBL/GenBank/DDBJ databases">
        <title>The complete genome sequence of Neisseria gonorrhoeae.</title>
        <authorList>
            <person name="Lewis L.A."/>
            <person name="Gillaspy A.F."/>
            <person name="McLaughlin R.E."/>
            <person name="Gipson M."/>
            <person name="Ducey T.F."/>
            <person name="Ownbey T."/>
            <person name="Hartman K."/>
            <person name="Nydick C."/>
            <person name="Carson M.B."/>
            <person name="Vaughn J."/>
            <person name="Thomson C."/>
            <person name="Song L."/>
            <person name="Lin S."/>
            <person name="Yuan X."/>
            <person name="Najar F."/>
            <person name="Zhan M."/>
            <person name="Ren Q."/>
            <person name="Zhu H."/>
            <person name="Qi S."/>
            <person name="Kenton S.M."/>
            <person name="Lai H."/>
            <person name="White J.D."/>
            <person name="Clifton S."/>
            <person name="Roe B.A."/>
            <person name="Dyer D.W."/>
        </authorList>
    </citation>
    <scope>NUCLEOTIDE SEQUENCE [LARGE SCALE GENOMIC DNA]</scope>
    <source>
        <strain>ATCC 700825 / FA 1090</strain>
    </source>
</reference>
<dbReference type="EC" id="4.3.2.10" evidence="1"/>
<dbReference type="EC" id="3.5.1.2" evidence="1"/>
<dbReference type="EMBL" id="AE004969">
    <property type="protein sequence ID" value="AAW88966.1"/>
    <property type="molecule type" value="Genomic_DNA"/>
</dbReference>
<dbReference type="RefSeq" id="WP_003687537.1">
    <property type="nucleotide sequence ID" value="NC_002946.2"/>
</dbReference>
<dbReference type="RefSeq" id="YP_207378.1">
    <property type="nucleotide sequence ID" value="NC_002946.2"/>
</dbReference>
<dbReference type="SMR" id="Q5FA21"/>
<dbReference type="STRING" id="242231.NGO_0213"/>
<dbReference type="MEROPS" id="C26.965"/>
<dbReference type="GeneID" id="66752544"/>
<dbReference type="KEGG" id="ngo:NGO_0213"/>
<dbReference type="PATRIC" id="fig|242231.10.peg.264"/>
<dbReference type="HOGENOM" id="CLU_071837_2_0_4"/>
<dbReference type="UniPathway" id="UPA00031">
    <property type="reaction ID" value="UER00010"/>
</dbReference>
<dbReference type="Proteomes" id="UP000000535">
    <property type="component" value="Chromosome"/>
</dbReference>
<dbReference type="GO" id="GO:0005737">
    <property type="term" value="C:cytoplasm"/>
    <property type="evidence" value="ECO:0007669"/>
    <property type="project" value="UniProtKB-SubCell"/>
</dbReference>
<dbReference type="GO" id="GO:0004359">
    <property type="term" value="F:glutaminase activity"/>
    <property type="evidence" value="ECO:0007669"/>
    <property type="project" value="UniProtKB-EC"/>
</dbReference>
<dbReference type="GO" id="GO:0000107">
    <property type="term" value="F:imidazoleglycerol-phosphate synthase activity"/>
    <property type="evidence" value="ECO:0007669"/>
    <property type="project" value="UniProtKB-UniRule"/>
</dbReference>
<dbReference type="GO" id="GO:0016829">
    <property type="term" value="F:lyase activity"/>
    <property type="evidence" value="ECO:0007669"/>
    <property type="project" value="UniProtKB-KW"/>
</dbReference>
<dbReference type="GO" id="GO:0000105">
    <property type="term" value="P:L-histidine biosynthetic process"/>
    <property type="evidence" value="ECO:0007669"/>
    <property type="project" value="UniProtKB-UniRule"/>
</dbReference>
<dbReference type="CDD" id="cd01748">
    <property type="entry name" value="GATase1_IGP_Synthase"/>
    <property type="match status" value="1"/>
</dbReference>
<dbReference type="FunFam" id="3.40.50.880:FF:000023">
    <property type="entry name" value="Imidazole glycerol phosphate synthase subunit HisH"/>
    <property type="match status" value="1"/>
</dbReference>
<dbReference type="Gene3D" id="3.40.50.880">
    <property type="match status" value="1"/>
</dbReference>
<dbReference type="HAMAP" id="MF_00278">
    <property type="entry name" value="HisH"/>
    <property type="match status" value="1"/>
</dbReference>
<dbReference type="InterPro" id="IPR029062">
    <property type="entry name" value="Class_I_gatase-like"/>
</dbReference>
<dbReference type="InterPro" id="IPR017926">
    <property type="entry name" value="GATASE"/>
</dbReference>
<dbReference type="InterPro" id="IPR010139">
    <property type="entry name" value="Imidazole-glycPsynth_HisH"/>
</dbReference>
<dbReference type="NCBIfam" id="TIGR01855">
    <property type="entry name" value="IMP_synth_hisH"/>
    <property type="match status" value="1"/>
</dbReference>
<dbReference type="PANTHER" id="PTHR42701">
    <property type="entry name" value="IMIDAZOLE GLYCEROL PHOSPHATE SYNTHASE SUBUNIT HISH"/>
    <property type="match status" value="1"/>
</dbReference>
<dbReference type="PANTHER" id="PTHR42701:SF2">
    <property type="entry name" value="IMIDAZOLE GLYCEROL PHOSPHATE SYNTHASE SUBUNIT HISH 1"/>
    <property type="match status" value="1"/>
</dbReference>
<dbReference type="Pfam" id="PF00117">
    <property type="entry name" value="GATase"/>
    <property type="match status" value="1"/>
</dbReference>
<dbReference type="PIRSF" id="PIRSF000495">
    <property type="entry name" value="Amidotransf_hisH"/>
    <property type="match status" value="1"/>
</dbReference>
<dbReference type="SUPFAM" id="SSF52317">
    <property type="entry name" value="Class I glutamine amidotransferase-like"/>
    <property type="match status" value="1"/>
</dbReference>
<dbReference type="PROSITE" id="PS51273">
    <property type="entry name" value="GATASE_TYPE_1"/>
    <property type="match status" value="1"/>
</dbReference>
<organism>
    <name type="scientific">Neisseria gonorrhoeae (strain ATCC 700825 / FA 1090)</name>
    <dbReference type="NCBI Taxonomy" id="242231"/>
    <lineage>
        <taxon>Bacteria</taxon>
        <taxon>Pseudomonadati</taxon>
        <taxon>Pseudomonadota</taxon>
        <taxon>Betaproteobacteria</taxon>
        <taxon>Neisseriales</taxon>
        <taxon>Neisseriaceae</taxon>
        <taxon>Neisseria</taxon>
    </lineage>
</organism>
<keyword id="KW-0028">Amino-acid biosynthesis</keyword>
<keyword id="KW-0963">Cytoplasm</keyword>
<keyword id="KW-0315">Glutamine amidotransferase</keyword>
<keyword id="KW-0368">Histidine biosynthesis</keyword>
<keyword id="KW-0378">Hydrolase</keyword>
<keyword id="KW-0456">Lyase</keyword>
<keyword id="KW-1185">Reference proteome</keyword>
<sequence>MQTAIIDYGMGNLHSVLKSVRTAGQLAGKNTKIFLSGDPDRVSRADKVIFPGQGAMPDCMAALTRGGLDEAVKDALKNKPFFGICVGAQLLFDHSEEGNTDGLGWFGGKVRRFARDLRDPQGCRLKVPHMGWNTVRQTQNHPLFQGIPQNTRFYFVHSYYFAPENPETILGESDYPSPFACIVGKDNVFATQFHTEKSHDAGLTMLKNFLNW</sequence>